<name>CYB_EROSE</name>
<dbReference type="EMBL" id="AY620439">
    <property type="protein sequence ID" value="AAU04698.1"/>
    <property type="molecule type" value="Genomic_DNA"/>
</dbReference>
<dbReference type="SMR" id="Q4VUY8"/>
<dbReference type="GO" id="GO:0005743">
    <property type="term" value="C:mitochondrial inner membrane"/>
    <property type="evidence" value="ECO:0007669"/>
    <property type="project" value="UniProtKB-SubCell"/>
</dbReference>
<dbReference type="GO" id="GO:0045275">
    <property type="term" value="C:respiratory chain complex III"/>
    <property type="evidence" value="ECO:0007669"/>
    <property type="project" value="InterPro"/>
</dbReference>
<dbReference type="GO" id="GO:0046872">
    <property type="term" value="F:metal ion binding"/>
    <property type="evidence" value="ECO:0007669"/>
    <property type="project" value="UniProtKB-KW"/>
</dbReference>
<dbReference type="GO" id="GO:0008121">
    <property type="term" value="F:ubiquinol-cytochrome-c reductase activity"/>
    <property type="evidence" value="ECO:0007669"/>
    <property type="project" value="InterPro"/>
</dbReference>
<dbReference type="GO" id="GO:0006122">
    <property type="term" value="P:mitochondrial electron transport, ubiquinol to cytochrome c"/>
    <property type="evidence" value="ECO:0007669"/>
    <property type="project" value="TreeGrafter"/>
</dbReference>
<dbReference type="CDD" id="cd00290">
    <property type="entry name" value="cytochrome_b_C"/>
    <property type="match status" value="1"/>
</dbReference>
<dbReference type="CDD" id="cd00284">
    <property type="entry name" value="Cytochrome_b_N"/>
    <property type="match status" value="1"/>
</dbReference>
<dbReference type="FunFam" id="1.20.810.10:FF:000002">
    <property type="entry name" value="Cytochrome b"/>
    <property type="match status" value="1"/>
</dbReference>
<dbReference type="Gene3D" id="1.20.810.10">
    <property type="entry name" value="Cytochrome Bc1 Complex, Chain C"/>
    <property type="match status" value="1"/>
</dbReference>
<dbReference type="InterPro" id="IPR005798">
    <property type="entry name" value="Cyt_b/b6_C"/>
</dbReference>
<dbReference type="InterPro" id="IPR036150">
    <property type="entry name" value="Cyt_b/b6_C_sf"/>
</dbReference>
<dbReference type="InterPro" id="IPR005797">
    <property type="entry name" value="Cyt_b/b6_N"/>
</dbReference>
<dbReference type="InterPro" id="IPR027387">
    <property type="entry name" value="Cytb/b6-like_sf"/>
</dbReference>
<dbReference type="InterPro" id="IPR030689">
    <property type="entry name" value="Cytochrome_b"/>
</dbReference>
<dbReference type="InterPro" id="IPR048260">
    <property type="entry name" value="Cytochrome_b_C_euk/bac"/>
</dbReference>
<dbReference type="InterPro" id="IPR048259">
    <property type="entry name" value="Cytochrome_b_N_euk/bac"/>
</dbReference>
<dbReference type="InterPro" id="IPR016174">
    <property type="entry name" value="Di-haem_cyt_TM"/>
</dbReference>
<dbReference type="PANTHER" id="PTHR19271">
    <property type="entry name" value="CYTOCHROME B"/>
    <property type="match status" value="1"/>
</dbReference>
<dbReference type="PANTHER" id="PTHR19271:SF16">
    <property type="entry name" value="CYTOCHROME B"/>
    <property type="match status" value="1"/>
</dbReference>
<dbReference type="Pfam" id="PF00032">
    <property type="entry name" value="Cytochrom_B_C"/>
    <property type="match status" value="1"/>
</dbReference>
<dbReference type="Pfam" id="PF00033">
    <property type="entry name" value="Cytochrome_B"/>
    <property type="match status" value="1"/>
</dbReference>
<dbReference type="PIRSF" id="PIRSF038885">
    <property type="entry name" value="COB"/>
    <property type="match status" value="1"/>
</dbReference>
<dbReference type="SUPFAM" id="SSF81648">
    <property type="entry name" value="a domain/subunit of cytochrome bc1 complex (Ubiquinol-cytochrome c reductase)"/>
    <property type="match status" value="1"/>
</dbReference>
<dbReference type="SUPFAM" id="SSF81342">
    <property type="entry name" value="Transmembrane di-heme cytochromes"/>
    <property type="match status" value="1"/>
</dbReference>
<dbReference type="PROSITE" id="PS51003">
    <property type="entry name" value="CYTB_CTER"/>
    <property type="match status" value="1"/>
</dbReference>
<dbReference type="PROSITE" id="PS51002">
    <property type="entry name" value="CYTB_NTER"/>
    <property type="match status" value="1"/>
</dbReference>
<gene>
    <name type="primary">MT-CYB</name>
    <name type="synonym">COB</name>
    <name type="synonym">CYTB</name>
    <name type="synonym">MTCYB</name>
</gene>
<protein>
    <recommendedName>
        <fullName>Cytochrome b</fullName>
    </recommendedName>
    <alternativeName>
        <fullName>Complex III subunit 3</fullName>
    </alternativeName>
    <alternativeName>
        <fullName>Complex III subunit III</fullName>
    </alternativeName>
    <alternativeName>
        <fullName>Cytochrome b-c1 complex subunit 3</fullName>
    </alternativeName>
    <alternativeName>
        <fullName>Ubiquinol-cytochrome-c reductase complex cytochrome b subunit</fullName>
    </alternativeName>
</protein>
<proteinExistence type="inferred from homology"/>
<geneLocation type="mitochondrion"/>
<comment type="function">
    <text evidence="2">Component of the ubiquinol-cytochrome c reductase complex (complex III or cytochrome b-c1 complex) that is part of the mitochondrial respiratory chain. The b-c1 complex mediates electron transfer from ubiquinol to cytochrome c. Contributes to the generation of a proton gradient across the mitochondrial membrane that is then used for ATP synthesis.</text>
</comment>
<comment type="cofactor">
    <cofactor evidence="2">
        <name>heme b</name>
        <dbReference type="ChEBI" id="CHEBI:60344"/>
    </cofactor>
    <text evidence="2">Binds 2 heme b groups non-covalently.</text>
</comment>
<comment type="subunit">
    <text evidence="2">The cytochrome bc1 complex contains 11 subunits: 3 respiratory subunits (MT-CYB, CYC1 and UQCRFS1), 2 core proteins (UQCRC1 and UQCRC2) and 6 low-molecular weight proteins (UQCRH/QCR6, UQCRB/QCR7, UQCRQ/QCR8, UQCR10/QCR9, UQCR11/QCR10 and a cleavage product of UQCRFS1). This cytochrome bc1 complex then forms a dimer.</text>
</comment>
<comment type="subcellular location">
    <subcellularLocation>
        <location evidence="2">Mitochondrion inner membrane</location>
        <topology evidence="2">Multi-pass membrane protein</topology>
    </subcellularLocation>
</comment>
<comment type="miscellaneous">
    <text evidence="1">Heme 1 (or BL or b562) is low-potential and absorbs at about 562 nm, and heme 2 (or BH or b566) is high-potential and absorbs at about 566 nm.</text>
</comment>
<comment type="similarity">
    <text evidence="3 4">Belongs to the cytochrome b family.</text>
</comment>
<comment type="caution">
    <text evidence="2">The full-length protein contains only eight transmembrane helices, not nine as predicted by bioinformatics tools.</text>
</comment>
<sequence length="379" mass="42595">MTNIRKTHPLLKIVNSSFVDLPAPSSLSSWWNFGSLLGVCLAVQILTGLFLAMHYTSDTATAFNSVAHICRDVNYGWVLRYLHANGASMFFICLYLHVGRGLYYGSYLFTETWNIGIILLFAVMATAFMGYVLPWGQMSFWGATVITNLLSAIPYIGTDLVQWIWGGFSVDKATLTRFFAFHFLLPFIVTALVMVHLLFLHETGSNNPTGIPSDPDMIPFHPYYTIKDILGFLIMLTALSTLVLFSPDLLGDPDNYMPANPLSTPPHIKPEWYFLFAYAILRSIPNKLGGVLALVLSILILAVVPLLHTSKQRSMMFRPLSQCLFWLLVAVLLTLTWIGGQPVEHPYVIIGQVASVLYFLILLIFMPLISILENYLLKW</sequence>
<reference key="1">
    <citation type="submission" date="2004-05" db="EMBL/GenBank/DDBJ databases">
        <title>Phylogeny of Brachyphylla.</title>
        <authorList>
            <person name="Davalos L.M."/>
        </authorList>
    </citation>
    <scope>NUCLEOTIDE SEQUENCE [GENOMIC DNA]</scope>
    <source>
        <strain>Isolate AMCC 102699</strain>
    </source>
</reference>
<evidence type="ECO:0000250" key="1"/>
<evidence type="ECO:0000250" key="2">
    <source>
        <dbReference type="UniProtKB" id="P00157"/>
    </source>
</evidence>
<evidence type="ECO:0000255" key="3">
    <source>
        <dbReference type="PROSITE-ProRule" id="PRU00967"/>
    </source>
</evidence>
<evidence type="ECO:0000255" key="4">
    <source>
        <dbReference type="PROSITE-ProRule" id="PRU00968"/>
    </source>
</evidence>
<organism>
    <name type="scientific">Erophylla sezekorni</name>
    <name type="common">Buffy flower bat</name>
    <name type="synonym">Phyllonycteris sezekorni</name>
    <dbReference type="NCBI Taxonomy" id="148092"/>
    <lineage>
        <taxon>Eukaryota</taxon>
        <taxon>Metazoa</taxon>
        <taxon>Chordata</taxon>
        <taxon>Craniata</taxon>
        <taxon>Vertebrata</taxon>
        <taxon>Euteleostomi</taxon>
        <taxon>Mammalia</taxon>
        <taxon>Eutheria</taxon>
        <taxon>Laurasiatheria</taxon>
        <taxon>Chiroptera</taxon>
        <taxon>Yangochiroptera</taxon>
        <taxon>Phyllostomidae</taxon>
        <taxon>Phyllonycterinae</taxon>
        <taxon>Erophylla</taxon>
    </lineage>
</organism>
<keyword id="KW-0249">Electron transport</keyword>
<keyword id="KW-0349">Heme</keyword>
<keyword id="KW-0408">Iron</keyword>
<keyword id="KW-0472">Membrane</keyword>
<keyword id="KW-0479">Metal-binding</keyword>
<keyword id="KW-0496">Mitochondrion</keyword>
<keyword id="KW-0999">Mitochondrion inner membrane</keyword>
<keyword id="KW-0679">Respiratory chain</keyword>
<keyword id="KW-0812">Transmembrane</keyword>
<keyword id="KW-1133">Transmembrane helix</keyword>
<keyword id="KW-0813">Transport</keyword>
<keyword id="KW-0830">Ubiquinone</keyword>
<feature type="chain" id="PRO_0000060941" description="Cytochrome b">
    <location>
        <begin position="1"/>
        <end position="379"/>
    </location>
</feature>
<feature type="transmembrane region" description="Helical" evidence="2">
    <location>
        <begin position="33"/>
        <end position="53"/>
    </location>
</feature>
<feature type="transmembrane region" description="Helical" evidence="2">
    <location>
        <begin position="77"/>
        <end position="98"/>
    </location>
</feature>
<feature type="transmembrane region" description="Helical" evidence="2">
    <location>
        <begin position="113"/>
        <end position="133"/>
    </location>
</feature>
<feature type="transmembrane region" description="Helical" evidence="2">
    <location>
        <begin position="178"/>
        <end position="198"/>
    </location>
</feature>
<feature type="transmembrane region" description="Helical" evidence="2">
    <location>
        <begin position="226"/>
        <end position="246"/>
    </location>
</feature>
<feature type="transmembrane region" description="Helical" evidence="2">
    <location>
        <begin position="288"/>
        <end position="308"/>
    </location>
</feature>
<feature type="transmembrane region" description="Helical" evidence="2">
    <location>
        <begin position="320"/>
        <end position="340"/>
    </location>
</feature>
<feature type="transmembrane region" description="Helical" evidence="2">
    <location>
        <begin position="347"/>
        <end position="367"/>
    </location>
</feature>
<feature type="binding site" description="axial binding residue" evidence="2">
    <location>
        <position position="83"/>
    </location>
    <ligand>
        <name>heme b</name>
        <dbReference type="ChEBI" id="CHEBI:60344"/>
        <label>b562</label>
    </ligand>
    <ligandPart>
        <name>Fe</name>
        <dbReference type="ChEBI" id="CHEBI:18248"/>
    </ligandPart>
</feature>
<feature type="binding site" description="axial binding residue" evidence="2">
    <location>
        <position position="97"/>
    </location>
    <ligand>
        <name>heme b</name>
        <dbReference type="ChEBI" id="CHEBI:60344"/>
        <label>b566</label>
    </ligand>
    <ligandPart>
        <name>Fe</name>
        <dbReference type="ChEBI" id="CHEBI:18248"/>
    </ligandPart>
</feature>
<feature type="binding site" description="axial binding residue" evidence="2">
    <location>
        <position position="182"/>
    </location>
    <ligand>
        <name>heme b</name>
        <dbReference type="ChEBI" id="CHEBI:60344"/>
        <label>b562</label>
    </ligand>
    <ligandPart>
        <name>Fe</name>
        <dbReference type="ChEBI" id="CHEBI:18248"/>
    </ligandPart>
</feature>
<feature type="binding site" description="axial binding residue" evidence="2">
    <location>
        <position position="196"/>
    </location>
    <ligand>
        <name>heme b</name>
        <dbReference type="ChEBI" id="CHEBI:60344"/>
        <label>b566</label>
    </ligand>
    <ligandPart>
        <name>Fe</name>
        <dbReference type="ChEBI" id="CHEBI:18248"/>
    </ligandPart>
</feature>
<feature type="binding site" evidence="2">
    <location>
        <position position="201"/>
    </location>
    <ligand>
        <name>a ubiquinone</name>
        <dbReference type="ChEBI" id="CHEBI:16389"/>
    </ligand>
</feature>
<accession>Q4VUY8</accession>